<evidence type="ECO:0000255" key="1">
    <source>
        <dbReference type="HAMAP-Rule" id="MF_00690"/>
    </source>
</evidence>
<feature type="chain" id="PRO_1000045157" description="UPF0270 protein ASA_3305">
    <location>
        <begin position="1"/>
        <end position="80"/>
    </location>
</feature>
<dbReference type="EMBL" id="CP000644">
    <property type="protein sequence ID" value="ABO91287.1"/>
    <property type="molecule type" value="Genomic_DNA"/>
</dbReference>
<dbReference type="RefSeq" id="WP_005311785.1">
    <property type="nucleotide sequence ID" value="NC_009348.1"/>
</dbReference>
<dbReference type="SMR" id="A4SQW5"/>
<dbReference type="STRING" id="29491.GCA_000820065_03691"/>
<dbReference type="KEGG" id="asa:ASA_3305"/>
<dbReference type="eggNOG" id="COG3089">
    <property type="taxonomic scope" value="Bacteria"/>
</dbReference>
<dbReference type="HOGENOM" id="CLU_186759_1_0_6"/>
<dbReference type="Proteomes" id="UP000000225">
    <property type="component" value="Chromosome"/>
</dbReference>
<dbReference type="Gene3D" id="1.10.10.610">
    <property type="entry name" value="YehU-like"/>
    <property type="match status" value="1"/>
</dbReference>
<dbReference type="HAMAP" id="MF_00690">
    <property type="entry name" value="UPF0270"/>
    <property type="match status" value="1"/>
</dbReference>
<dbReference type="InterPro" id="IPR010648">
    <property type="entry name" value="UPF0270"/>
</dbReference>
<dbReference type="InterPro" id="IPR036685">
    <property type="entry name" value="YehU-like_sf"/>
</dbReference>
<dbReference type="NCBIfam" id="NF003438">
    <property type="entry name" value="PRK04966.1"/>
    <property type="match status" value="1"/>
</dbReference>
<dbReference type="Pfam" id="PF06794">
    <property type="entry name" value="UPF0270"/>
    <property type="match status" value="1"/>
</dbReference>
<dbReference type="PIRSF" id="PIRSF006169">
    <property type="entry name" value="UCP006169"/>
    <property type="match status" value="1"/>
</dbReference>
<dbReference type="SUPFAM" id="SSF118001">
    <property type="entry name" value="YehU-like"/>
    <property type="match status" value="1"/>
</dbReference>
<gene>
    <name type="ordered locus">ASA_3305</name>
</gene>
<reference key="1">
    <citation type="journal article" date="2008" name="BMC Genomics">
        <title>The genome of Aeromonas salmonicida subsp. salmonicida A449: insights into the evolution of a fish pathogen.</title>
        <authorList>
            <person name="Reith M.E."/>
            <person name="Singh R.K."/>
            <person name="Curtis B."/>
            <person name="Boyd J.M."/>
            <person name="Bouevitch A."/>
            <person name="Kimball J."/>
            <person name="Munholland J."/>
            <person name="Murphy C."/>
            <person name="Sarty D."/>
            <person name="Williams J."/>
            <person name="Nash J.H."/>
            <person name="Johnson S.C."/>
            <person name="Brown L.L."/>
        </authorList>
    </citation>
    <scope>NUCLEOTIDE SEQUENCE [LARGE SCALE GENOMIC DNA]</scope>
    <source>
        <strain>A449</strain>
    </source>
</reference>
<proteinExistence type="inferred from homology"/>
<organism>
    <name type="scientific">Aeromonas salmonicida (strain A449)</name>
    <dbReference type="NCBI Taxonomy" id="382245"/>
    <lineage>
        <taxon>Bacteria</taxon>
        <taxon>Pseudomonadati</taxon>
        <taxon>Pseudomonadota</taxon>
        <taxon>Gammaproteobacteria</taxon>
        <taxon>Aeromonadales</taxon>
        <taxon>Aeromonadaceae</taxon>
        <taxon>Aeromonas</taxon>
    </lineage>
</organism>
<protein>
    <recommendedName>
        <fullName evidence="1">UPF0270 protein ASA_3305</fullName>
    </recommendedName>
</protein>
<comment type="similarity">
    <text evidence="1">Belongs to the UPF0270 family.</text>
</comment>
<name>Y3305_AERS4</name>
<accession>A4SQW5</accession>
<sequence length="80" mass="9023">MIIPWQDLDSDTLNNLLEHFVLREGTEYGEHDVSLADKVDEVRQQLKQGLAVIVYSELHESINIVSKATFSSAPVDDIPE</sequence>